<organism>
    <name type="scientific">Colwellia psychrerythraea (strain 34H / ATCC BAA-681)</name>
    <name type="common">Vibrio psychroerythus</name>
    <dbReference type="NCBI Taxonomy" id="167879"/>
    <lineage>
        <taxon>Bacteria</taxon>
        <taxon>Pseudomonadati</taxon>
        <taxon>Pseudomonadota</taxon>
        <taxon>Gammaproteobacteria</taxon>
        <taxon>Alteromonadales</taxon>
        <taxon>Colwelliaceae</taxon>
        <taxon>Colwellia</taxon>
    </lineage>
</organism>
<protein>
    <recommendedName>
        <fullName evidence="1">Acyl carrier protein</fullName>
        <shortName evidence="1">ACP</shortName>
    </recommendedName>
</protein>
<comment type="function">
    <text evidence="1">Carrier of the growing fatty acid chain in fatty acid biosynthesis.</text>
</comment>
<comment type="pathway">
    <text evidence="1">Lipid metabolism; fatty acid biosynthesis.</text>
</comment>
<comment type="subcellular location">
    <subcellularLocation>
        <location evidence="1">Cytoplasm</location>
    </subcellularLocation>
</comment>
<comment type="PTM">
    <text evidence="1">4'-phosphopantetheine is transferred from CoA to a specific serine of apo-ACP by AcpS. This modification is essential for activity because fatty acids are bound in thioester linkage to the sulfhydryl of the prosthetic group.</text>
</comment>
<comment type="similarity">
    <text evidence="1">Belongs to the acyl carrier protein (ACP) family.</text>
</comment>
<accession>Q482J9</accession>
<name>ACP_COLP3</name>
<keyword id="KW-0963">Cytoplasm</keyword>
<keyword id="KW-0275">Fatty acid biosynthesis</keyword>
<keyword id="KW-0276">Fatty acid metabolism</keyword>
<keyword id="KW-0444">Lipid biosynthesis</keyword>
<keyword id="KW-0443">Lipid metabolism</keyword>
<keyword id="KW-0596">Phosphopantetheine</keyword>
<keyword id="KW-0597">Phosphoprotein</keyword>
<dbReference type="EMBL" id="CP000083">
    <property type="protein sequence ID" value="AAZ25700.1"/>
    <property type="molecule type" value="Genomic_DNA"/>
</dbReference>
<dbReference type="RefSeq" id="WP_011043112.1">
    <property type="nucleotide sequence ID" value="NC_003910.7"/>
</dbReference>
<dbReference type="SMR" id="Q482J9"/>
<dbReference type="STRING" id="167879.CPS_2298"/>
<dbReference type="KEGG" id="cps:CPS_2298"/>
<dbReference type="eggNOG" id="COG0236">
    <property type="taxonomic scope" value="Bacteria"/>
</dbReference>
<dbReference type="HOGENOM" id="CLU_108696_5_1_6"/>
<dbReference type="UniPathway" id="UPA00094"/>
<dbReference type="Proteomes" id="UP000000547">
    <property type="component" value="Chromosome"/>
</dbReference>
<dbReference type="GO" id="GO:0005829">
    <property type="term" value="C:cytosol"/>
    <property type="evidence" value="ECO:0007669"/>
    <property type="project" value="TreeGrafter"/>
</dbReference>
<dbReference type="GO" id="GO:0016020">
    <property type="term" value="C:membrane"/>
    <property type="evidence" value="ECO:0007669"/>
    <property type="project" value="GOC"/>
</dbReference>
<dbReference type="GO" id="GO:0000035">
    <property type="term" value="F:acyl binding"/>
    <property type="evidence" value="ECO:0007669"/>
    <property type="project" value="TreeGrafter"/>
</dbReference>
<dbReference type="GO" id="GO:0000036">
    <property type="term" value="F:acyl carrier activity"/>
    <property type="evidence" value="ECO:0007669"/>
    <property type="project" value="UniProtKB-UniRule"/>
</dbReference>
<dbReference type="GO" id="GO:0009245">
    <property type="term" value="P:lipid A biosynthetic process"/>
    <property type="evidence" value="ECO:0007669"/>
    <property type="project" value="TreeGrafter"/>
</dbReference>
<dbReference type="FunFam" id="1.10.1200.10:FF:000001">
    <property type="entry name" value="Acyl carrier protein"/>
    <property type="match status" value="1"/>
</dbReference>
<dbReference type="Gene3D" id="1.10.1200.10">
    <property type="entry name" value="ACP-like"/>
    <property type="match status" value="1"/>
</dbReference>
<dbReference type="HAMAP" id="MF_01217">
    <property type="entry name" value="Acyl_carrier"/>
    <property type="match status" value="1"/>
</dbReference>
<dbReference type="InterPro" id="IPR003231">
    <property type="entry name" value="ACP"/>
</dbReference>
<dbReference type="InterPro" id="IPR036736">
    <property type="entry name" value="ACP-like_sf"/>
</dbReference>
<dbReference type="InterPro" id="IPR009081">
    <property type="entry name" value="PP-bd_ACP"/>
</dbReference>
<dbReference type="InterPro" id="IPR006162">
    <property type="entry name" value="Ppantetheine_attach_site"/>
</dbReference>
<dbReference type="NCBIfam" id="TIGR00517">
    <property type="entry name" value="acyl_carrier"/>
    <property type="match status" value="1"/>
</dbReference>
<dbReference type="NCBIfam" id="NF002148">
    <property type="entry name" value="PRK00982.1-2"/>
    <property type="match status" value="1"/>
</dbReference>
<dbReference type="NCBIfam" id="NF002149">
    <property type="entry name" value="PRK00982.1-3"/>
    <property type="match status" value="1"/>
</dbReference>
<dbReference type="NCBIfam" id="NF002150">
    <property type="entry name" value="PRK00982.1-4"/>
    <property type="match status" value="1"/>
</dbReference>
<dbReference type="NCBIfam" id="NF002151">
    <property type="entry name" value="PRK00982.1-5"/>
    <property type="match status" value="1"/>
</dbReference>
<dbReference type="PANTHER" id="PTHR20863">
    <property type="entry name" value="ACYL CARRIER PROTEIN"/>
    <property type="match status" value="1"/>
</dbReference>
<dbReference type="PANTHER" id="PTHR20863:SF76">
    <property type="entry name" value="CARRIER DOMAIN-CONTAINING PROTEIN"/>
    <property type="match status" value="1"/>
</dbReference>
<dbReference type="Pfam" id="PF00550">
    <property type="entry name" value="PP-binding"/>
    <property type="match status" value="1"/>
</dbReference>
<dbReference type="SUPFAM" id="SSF47336">
    <property type="entry name" value="ACP-like"/>
    <property type="match status" value="1"/>
</dbReference>
<dbReference type="PROSITE" id="PS50075">
    <property type="entry name" value="CARRIER"/>
    <property type="match status" value="1"/>
</dbReference>
<dbReference type="PROSITE" id="PS00012">
    <property type="entry name" value="PHOSPHOPANTETHEINE"/>
    <property type="match status" value="1"/>
</dbReference>
<proteinExistence type="inferred from homology"/>
<feature type="chain" id="PRO_1000066594" description="Acyl carrier protein">
    <location>
        <begin position="1"/>
        <end position="77"/>
    </location>
</feature>
<feature type="domain" description="Carrier" evidence="2">
    <location>
        <begin position="2"/>
        <end position="77"/>
    </location>
</feature>
<feature type="modified residue" description="O-(pantetheine 4'-phosphoryl)serine" evidence="2">
    <location>
        <position position="37"/>
    </location>
</feature>
<reference key="1">
    <citation type="journal article" date="2005" name="Proc. Natl. Acad. Sci. U.S.A.">
        <title>The psychrophilic lifestyle as revealed by the genome sequence of Colwellia psychrerythraea 34H through genomic and proteomic analyses.</title>
        <authorList>
            <person name="Methe B.A."/>
            <person name="Nelson K.E."/>
            <person name="Deming J.W."/>
            <person name="Momen B."/>
            <person name="Melamud E."/>
            <person name="Zhang X."/>
            <person name="Moult J."/>
            <person name="Madupu R."/>
            <person name="Nelson W.C."/>
            <person name="Dodson R.J."/>
            <person name="Brinkac L.M."/>
            <person name="Daugherty S.C."/>
            <person name="Durkin A.S."/>
            <person name="DeBoy R.T."/>
            <person name="Kolonay J.F."/>
            <person name="Sullivan S.A."/>
            <person name="Zhou L."/>
            <person name="Davidsen T.M."/>
            <person name="Wu M."/>
            <person name="Huston A.L."/>
            <person name="Lewis M."/>
            <person name="Weaver B."/>
            <person name="Weidman J.F."/>
            <person name="Khouri H."/>
            <person name="Utterback T.R."/>
            <person name="Feldblyum T.V."/>
            <person name="Fraser C.M."/>
        </authorList>
    </citation>
    <scope>NUCLEOTIDE SEQUENCE [LARGE SCALE GENOMIC DNA]</scope>
    <source>
        <strain>34H / ATCC BAA-681</strain>
    </source>
</reference>
<sequence>MSNIEERVKKITVEQLGVSEAEVKIDSSFVDDLGADSLDTVELVMALEEEFDTEIPDEEAEKITTVQAAIDYVTANQ</sequence>
<gene>
    <name evidence="1" type="primary">acpP</name>
    <name type="ordered locus">CPS_2298</name>
</gene>
<evidence type="ECO:0000255" key="1">
    <source>
        <dbReference type="HAMAP-Rule" id="MF_01217"/>
    </source>
</evidence>
<evidence type="ECO:0000255" key="2">
    <source>
        <dbReference type="PROSITE-ProRule" id="PRU00258"/>
    </source>
</evidence>